<evidence type="ECO:0000250" key="1">
    <source>
        <dbReference type="UniProtKB" id="D3ZZC3"/>
    </source>
</evidence>
<evidence type="ECO:0000250" key="2">
    <source>
        <dbReference type="UniProtKB" id="Q53GT1"/>
    </source>
</evidence>
<evidence type="ECO:0000255" key="3">
    <source>
        <dbReference type="PROSITE-ProRule" id="PRU00037"/>
    </source>
</evidence>
<evidence type="ECO:0000256" key="4">
    <source>
        <dbReference type="SAM" id="MobiDB-lite"/>
    </source>
</evidence>
<evidence type="ECO:0000269" key="5">
    <source>
    </source>
</evidence>
<evidence type="ECO:0000269" key="6">
    <source ref="4"/>
</evidence>
<evidence type="ECO:0000303" key="7">
    <source>
    </source>
</evidence>
<evidence type="ECO:0000305" key="8"/>
<evidence type="ECO:0000312" key="9">
    <source>
        <dbReference type="MGI" id="MGI:1337995"/>
    </source>
</evidence>
<gene>
    <name evidence="9" type="primary">Klhl22</name>
</gene>
<keyword id="KW-0007">Acetylation</keyword>
<keyword id="KW-0025">Alternative splicing</keyword>
<keyword id="KW-0131">Cell cycle</keyword>
<keyword id="KW-0132">Cell division</keyword>
<keyword id="KW-0963">Cytoplasm</keyword>
<keyword id="KW-0206">Cytoskeleton</keyword>
<keyword id="KW-0903">Direct protein sequencing</keyword>
<keyword id="KW-0880">Kelch repeat</keyword>
<keyword id="KW-0458">Lysosome</keyword>
<keyword id="KW-0498">Mitosis</keyword>
<keyword id="KW-0539">Nucleus</keyword>
<keyword id="KW-0597">Phosphoprotein</keyword>
<keyword id="KW-1185">Reference proteome</keyword>
<keyword id="KW-0677">Repeat</keyword>
<keyword id="KW-0833">Ubl conjugation pathway</keyword>
<protein>
    <recommendedName>
        <fullName evidence="8">Kelch-like protein 22</fullName>
    </recommendedName>
</protein>
<name>KLH22_MOUSE</name>
<dbReference type="EMBL" id="AK028197">
    <property type="protein sequence ID" value="BAC25806.1"/>
    <property type="molecule type" value="mRNA"/>
</dbReference>
<dbReference type="EMBL" id="AK143514">
    <property type="protein sequence ID" value="BAE25409.1"/>
    <property type="molecule type" value="mRNA"/>
</dbReference>
<dbReference type="EMBL" id="AC087802">
    <property type="status" value="NOT_ANNOTATED_CDS"/>
    <property type="molecule type" value="Genomic_DNA"/>
</dbReference>
<dbReference type="EMBL" id="BC005800">
    <property type="protein sequence ID" value="AAH05800.1"/>
    <property type="molecule type" value="mRNA"/>
</dbReference>
<dbReference type="CCDS" id="CCDS49783.1">
    <molecule id="Q99JN2-1"/>
</dbReference>
<dbReference type="RefSeq" id="NP_001345997.1">
    <molecule id="Q99JN2-1"/>
    <property type="nucleotide sequence ID" value="NM_001359068.1"/>
</dbReference>
<dbReference type="RefSeq" id="NP_001365951.1">
    <molecule id="Q99JN2-1"/>
    <property type="nucleotide sequence ID" value="NM_001379022.1"/>
</dbReference>
<dbReference type="RefSeq" id="NP_001365952.1">
    <molecule id="Q99JN2-1"/>
    <property type="nucleotide sequence ID" value="NM_001379023.1"/>
</dbReference>
<dbReference type="RefSeq" id="NP_663454.3">
    <molecule id="Q99JN2-1"/>
    <property type="nucleotide sequence ID" value="NM_145479.4"/>
</dbReference>
<dbReference type="RefSeq" id="XP_006522103.1">
    <property type="nucleotide sequence ID" value="XM_006522040.3"/>
</dbReference>
<dbReference type="RefSeq" id="XP_006522104.1">
    <property type="nucleotide sequence ID" value="XM_006522041.3"/>
</dbReference>
<dbReference type="SMR" id="Q99JN2"/>
<dbReference type="BioGRID" id="230228">
    <property type="interactions" value="6"/>
</dbReference>
<dbReference type="FunCoup" id="Q99JN2">
    <property type="interactions" value="1106"/>
</dbReference>
<dbReference type="IntAct" id="Q99JN2">
    <property type="interactions" value="7"/>
</dbReference>
<dbReference type="MINT" id="Q99JN2"/>
<dbReference type="STRING" id="10090.ENSMUSP00000112412"/>
<dbReference type="iPTMnet" id="Q99JN2"/>
<dbReference type="PhosphoSitePlus" id="Q99JN2"/>
<dbReference type="PaxDb" id="10090-ENSMUSP00000114115"/>
<dbReference type="ProteomicsDB" id="264847">
    <molecule id="Q99JN2-1"/>
</dbReference>
<dbReference type="ProteomicsDB" id="264848">
    <molecule id="Q99JN2-2"/>
</dbReference>
<dbReference type="Pumba" id="Q99JN2"/>
<dbReference type="Antibodypedia" id="34893">
    <property type="antibodies" value="183 antibodies from 27 providers"/>
</dbReference>
<dbReference type="DNASU" id="224023"/>
<dbReference type="Ensembl" id="ENSMUST00000120488.3">
    <molecule id="Q99JN2-1"/>
    <property type="protein sequence ID" value="ENSMUSP00000112412.2"/>
    <property type="gene ID" value="ENSMUSG00000022750.19"/>
</dbReference>
<dbReference type="Ensembl" id="ENSMUST00000165790.9">
    <molecule id="Q99JN2-1"/>
    <property type="protein sequence ID" value="ENSMUSP00000127227.2"/>
    <property type="gene ID" value="ENSMUSG00000022750.19"/>
</dbReference>
<dbReference type="GeneID" id="224023"/>
<dbReference type="KEGG" id="mmu:224023"/>
<dbReference type="UCSC" id="uc007ymc.2">
    <molecule id="Q99JN2-1"/>
    <property type="organism name" value="mouse"/>
</dbReference>
<dbReference type="AGR" id="MGI:1337995"/>
<dbReference type="CTD" id="84861"/>
<dbReference type="MGI" id="MGI:1337995">
    <property type="gene designation" value="Klhl22"/>
</dbReference>
<dbReference type="VEuPathDB" id="HostDB:ENSMUSG00000022750"/>
<dbReference type="eggNOG" id="KOG4441">
    <property type="taxonomic scope" value="Eukaryota"/>
</dbReference>
<dbReference type="GeneTree" id="ENSGT00940000159598"/>
<dbReference type="HOGENOM" id="CLU_004253_14_3_1"/>
<dbReference type="InParanoid" id="Q99JN2"/>
<dbReference type="OMA" id="ACYKPST"/>
<dbReference type="OrthoDB" id="45365at2759"/>
<dbReference type="PhylomeDB" id="Q99JN2"/>
<dbReference type="Reactome" id="R-MMU-8951664">
    <property type="pathway name" value="Neddylation"/>
</dbReference>
<dbReference type="Reactome" id="R-MMU-983168">
    <property type="pathway name" value="Antigen processing: Ubiquitination &amp; Proteasome degradation"/>
</dbReference>
<dbReference type="UniPathway" id="UPA00143"/>
<dbReference type="BioGRID-ORCS" id="224023">
    <property type="hits" value="1 hit in 79 CRISPR screens"/>
</dbReference>
<dbReference type="ChiTaRS" id="Klhl22">
    <property type="organism name" value="mouse"/>
</dbReference>
<dbReference type="PRO" id="PR:Q99JN2"/>
<dbReference type="Proteomes" id="UP000000589">
    <property type="component" value="Chromosome 16"/>
</dbReference>
<dbReference type="RNAct" id="Q99JN2">
    <property type="molecule type" value="protein"/>
</dbReference>
<dbReference type="Bgee" id="ENSMUSG00000022750">
    <property type="expression patterns" value="Expressed in saccule of membranous labyrinth and 249 other cell types or tissues"/>
</dbReference>
<dbReference type="ExpressionAtlas" id="Q99JN2">
    <property type="expression patterns" value="baseline and differential"/>
</dbReference>
<dbReference type="GO" id="GO:0005813">
    <property type="term" value="C:centrosome"/>
    <property type="evidence" value="ECO:0000250"/>
    <property type="project" value="UniProtKB"/>
</dbReference>
<dbReference type="GO" id="GO:0031463">
    <property type="term" value="C:Cul3-RING ubiquitin ligase complex"/>
    <property type="evidence" value="ECO:0000250"/>
    <property type="project" value="UniProtKB"/>
</dbReference>
<dbReference type="GO" id="GO:0005737">
    <property type="term" value="C:cytoplasm"/>
    <property type="evidence" value="ECO:0000250"/>
    <property type="project" value="UniProtKB"/>
</dbReference>
<dbReference type="GO" id="GO:0005829">
    <property type="term" value="C:cytosol"/>
    <property type="evidence" value="ECO:0000250"/>
    <property type="project" value="UniProtKB"/>
</dbReference>
<dbReference type="GO" id="GO:0045171">
    <property type="term" value="C:intercellular bridge"/>
    <property type="evidence" value="ECO:0007669"/>
    <property type="project" value="Ensembl"/>
</dbReference>
<dbReference type="GO" id="GO:0005764">
    <property type="term" value="C:lysosome"/>
    <property type="evidence" value="ECO:0007669"/>
    <property type="project" value="UniProtKB-SubCell"/>
</dbReference>
<dbReference type="GO" id="GO:0072686">
    <property type="term" value="C:mitotic spindle"/>
    <property type="evidence" value="ECO:0000250"/>
    <property type="project" value="UniProtKB"/>
</dbReference>
<dbReference type="GO" id="GO:0005634">
    <property type="term" value="C:nucleus"/>
    <property type="evidence" value="ECO:0007669"/>
    <property type="project" value="UniProtKB-SubCell"/>
</dbReference>
<dbReference type="GO" id="GO:0005827">
    <property type="term" value="C:polar microtubule"/>
    <property type="evidence" value="ECO:0000250"/>
    <property type="project" value="UniProtKB"/>
</dbReference>
<dbReference type="GO" id="GO:0071889">
    <property type="term" value="F:14-3-3 protein binding"/>
    <property type="evidence" value="ECO:0007669"/>
    <property type="project" value="Ensembl"/>
</dbReference>
<dbReference type="GO" id="GO:1990756">
    <property type="term" value="F:ubiquitin-like ligase-substrate adaptor activity"/>
    <property type="evidence" value="ECO:0007669"/>
    <property type="project" value="Ensembl"/>
</dbReference>
<dbReference type="GO" id="GO:0051301">
    <property type="term" value="P:cell division"/>
    <property type="evidence" value="ECO:0000250"/>
    <property type="project" value="UniProtKB"/>
</dbReference>
<dbReference type="GO" id="GO:0071230">
    <property type="term" value="P:cellular response to amino acid stimulus"/>
    <property type="evidence" value="ECO:0000315"/>
    <property type="project" value="UniProtKB"/>
</dbReference>
<dbReference type="GO" id="GO:0071233">
    <property type="term" value="P:cellular response to L-leucine"/>
    <property type="evidence" value="ECO:0000250"/>
    <property type="project" value="UniProtKB"/>
</dbReference>
<dbReference type="GO" id="GO:0000070">
    <property type="term" value="P:mitotic sister chromatid segregation"/>
    <property type="evidence" value="ECO:0000250"/>
    <property type="project" value="UniProtKB"/>
</dbReference>
<dbReference type="GO" id="GO:0007094">
    <property type="term" value="P:mitotic spindle assembly checkpoint signaling"/>
    <property type="evidence" value="ECO:0000250"/>
    <property type="project" value="UniProtKB"/>
</dbReference>
<dbReference type="GO" id="GO:0010507">
    <property type="term" value="P:negative regulation of autophagy"/>
    <property type="evidence" value="ECO:0000250"/>
    <property type="project" value="UniProtKB"/>
</dbReference>
<dbReference type="GO" id="GO:0032480">
    <property type="term" value="P:negative regulation of type I interferon production"/>
    <property type="evidence" value="ECO:0007669"/>
    <property type="project" value="Ensembl"/>
</dbReference>
<dbReference type="GO" id="GO:0030307">
    <property type="term" value="P:positive regulation of cell growth"/>
    <property type="evidence" value="ECO:0000250"/>
    <property type="project" value="UniProtKB"/>
</dbReference>
<dbReference type="GO" id="GO:0050870">
    <property type="term" value="P:positive regulation of T cell activation"/>
    <property type="evidence" value="ECO:0007669"/>
    <property type="project" value="Ensembl"/>
</dbReference>
<dbReference type="GO" id="GO:0002842">
    <property type="term" value="P:positive regulation of T cell mediated immune response to tumor cell"/>
    <property type="evidence" value="ECO:0007669"/>
    <property type="project" value="Ensembl"/>
</dbReference>
<dbReference type="GO" id="GO:1904263">
    <property type="term" value="P:positive regulation of TORC1 signaling"/>
    <property type="evidence" value="ECO:0000315"/>
    <property type="project" value="UniProtKB"/>
</dbReference>
<dbReference type="GO" id="GO:0043161">
    <property type="term" value="P:proteasome-mediated ubiquitin-dependent protein catabolic process"/>
    <property type="evidence" value="ECO:0000250"/>
    <property type="project" value="UniProtKB"/>
</dbReference>
<dbReference type="GO" id="GO:0006513">
    <property type="term" value="P:protein monoubiquitination"/>
    <property type="evidence" value="ECO:0000250"/>
    <property type="project" value="UniProtKB"/>
</dbReference>
<dbReference type="CDD" id="cd18461">
    <property type="entry name" value="BACK_KLHL22"/>
    <property type="match status" value="1"/>
</dbReference>
<dbReference type="CDD" id="cd18251">
    <property type="entry name" value="BTB_POZ_KLHL22"/>
    <property type="match status" value="1"/>
</dbReference>
<dbReference type="FunFam" id="1.25.40.420:FF:000018">
    <property type="entry name" value="Kelch-like family member 22"/>
    <property type="match status" value="1"/>
</dbReference>
<dbReference type="FunFam" id="2.120.10.80:FF:000040">
    <property type="entry name" value="Kelch-like family member 22"/>
    <property type="match status" value="1"/>
</dbReference>
<dbReference type="FunFam" id="3.30.710.10:FF:000083">
    <property type="entry name" value="Kelch-like family member 22"/>
    <property type="match status" value="1"/>
</dbReference>
<dbReference type="Gene3D" id="1.25.40.420">
    <property type="match status" value="1"/>
</dbReference>
<dbReference type="Gene3D" id="2.120.10.80">
    <property type="entry name" value="Kelch-type beta propeller"/>
    <property type="match status" value="1"/>
</dbReference>
<dbReference type="Gene3D" id="3.30.710.10">
    <property type="entry name" value="Potassium Channel Kv1.1, Chain A"/>
    <property type="match status" value="1"/>
</dbReference>
<dbReference type="InterPro" id="IPR011705">
    <property type="entry name" value="BACK"/>
</dbReference>
<dbReference type="InterPro" id="IPR017096">
    <property type="entry name" value="BTB-kelch_protein"/>
</dbReference>
<dbReference type="InterPro" id="IPR000210">
    <property type="entry name" value="BTB/POZ_dom"/>
</dbReference>
<dbReference type="InterPro" id="IPR015915">
    <property type="entry name" value="Kelch-typ_b-propeller"/>
</dbReference>
<dbReference type="InterPro" id="IPR006652">
    <property type="entry name" value="Kelch_1"/>
</dbReference>
<dbReference type="InterPro" id="IPR030575">
    <property type="entry name" value="KLHL22_BACK"/>
</dbReference>
<dbReference type="InterPro" id="IPR011333">
    <property type="entry name" value="SKP1/BTB/POZ_sf"/>
</dbReference>
<dbReference type="PANTHER" id="PTHR45632:SF5">
    <property type="entry name" value="KELCH-LIKE PROTEIN 22"/>
    <property type="match status" value="1"/>
</dbReference>
<dbReference type="PANTHER" id="PTHR45632">
    <property type="entry name" value="LD33804P"/>
    <property type="match status" value="1"/>
</dbReference>
<dbReference type="Pfam" id="PF07707">
    <property type="entry name" value="BACK"/>
    <property type="match status" value="1"/>
</dbReference>
<dbReference type="Pfam" id="PF00651">
    <property type="entry name" value="BTB"/>
    <property type="match status" value="1"/>
</dbReference>
<dbReference type="Pfam" id="PF01344">
    <property type="entry name" value="Kelch_1"/>
    <property type="match status" value="1"/>
</dbReference>
<dbReference type="Pfam" id="PF24681">
    <property type="entry name" value="Kelch_KLHDC2_KLHL20_DRC7"/>
    <property type="match status" value="1"/>
</dbReference>
<dbReference type="PIRSF" id="PIRSF037037">
    <property type="entry name" value="Kelch-like_protein_gigaxonin"/>
    <property type="match status" value="1"/>
</dbReference>
<dbReference type="SMART" id="SM00875">
    <property type="entry name" value="BACK"/>
    <property type="match status" value="1"/>
</dbReference>
<dbReference type="SMART" id="SM00225">
    <property type="entry name" value="BTB"/>
    <property type="match status" value="1"/>
</dbReference>
<dbReference type="SMART" id="SM00612">
    <property type="entry name" value="Kelch"/>
    <property type="match status" value="6"/>
</dbReference>
<dbReference type="SUPFAM" id="SSF117281">
    <property type="entry name" value="Kelch motif"/>
    <property type="match status" value="1"/>
</dbReference>
<dbReference type="SUPFAM" id="SSF54695">
    <property type="entry name" value="POZ domain"/>
    <property type="match status" value="1"/>
</dbReference>
<dbReference type="PROSITE" id="PS50097">
    <property type="entry name" value="BTB"/>
    <property type="match status" value="1"/>
</dbReference>
<proteinExistence type="evidence at protein level"/>
<sequence length="634" mass="71687">MAEEQDFAQLCRLPTQPSHSHCVNNTYRSTQHSQALLRGLLALRDSGILFDVVLVVEGKHIEAHRILLAASCDYFRGMFAGGLKEMEQEEVLIHGVSYNAMCQILHFIYTSELELSLSNVQETLVAACQLQIPEIIHFCCDFLMSWVDEENILDVYRLADLFDLNHLTQQLDTYILKNFVAFSRTDKYRQLPLEKVYSLLSSNRLEVSCETEVYEGALLYHYSLEQVQADQISLNEPPKLLETVRFPLMEAEVLQRLHDKLGPSPLRDTVASALMYHRNEILQPSLQGPQTELRSDFQCVVGFGGIHSTPSTILSDQAKYLNPLLGEWKHFTASLAPRMSNQGIAVLNNFVYLIGGDNNVQGFRAESRCWRYDPRHNRWFQIQSLQQEHADLCVCVVGKYIYAVAGRDYHNDLSAVERYDPATNSWDYVAPLKKEVYAHAGTTLQGKMYITCGRRGEDYLKETHCYDPGSNTWHTLADGPVRRAWHGMAALLDKLFVIGGSNNDAGYRRDVHQVACYSCTSRQWSSVCPLPAGHGEPGIAVLDSRIYVLGGRSHNRGSRTGYVHIYDMEKDCWEEGPQLNNSISGLAACVLTLPRSLLHEQPRGTPNRSQADADFASEVMSVSDWEEFDNSSED</sequence>
<comment type="function">
    <text evidence="2 5">Substrate-specific adapter of a BCR (BTB-CUL3-RBX1) E3 ubiquitin ligase complex required for chromosome alignment and localization of PLK1 at kinetochores. The BCR(KLHL22) ubiquitin ligase complex mediates monoubiquitination of PLK1, leading to PLK1 dissociation from phosphoreceptor proteins and subsequent removal from kinetochores, allowing silencing of the spindle assembly checkpoint (SAC) and chromosome segregation. Monoubiquitination of PLK1 does not lead to PLK1 degradation (By similarity). The BCR(KLHL22) ubiquitin ligase complex is also responsible for the amino acid-stimulated 'Lys-48' polyubiquitination and proteasomal degradation of DEPDC5. Through the degradation of DEPDC5, releases the GATOR1 complex-mediated inhibition of the TORC1 pathway. It is therefore an amino acid-dependent activator within the amino acid-sensing branch of the TORC1 pathway, indirectly regulating different cellular processes including cell growth and autophagy (PubMed:29769719).</text>
</comment>
<comment type="pathway">
    <text evidence="2">Protein modification; protein ubiquitination.</text>
</comment>
<comment type="subunit">
    <text evidence="2">Component of the BCR(KLHL22) E3 ubiquitin ligase complex, at least composed of CUL3, KLHL22 and RBX1. Interacts with PLK1. Interacts with DEPDC5 (via DEP domain); the interaction depends on amino acid availability. Interacts with YWHAE; required for the nuclear localization of KLHL22 upon amino acid starvation.</text>
</comment>
<comment type="subcellular location">
    <subcellularLocation>
        <location evidence="2">Cytoplasm</location>
        <location evidence="2">Cytosol</location>
    </subcellularLocation>
    <subcellularLocation>
        <location evidence="2">Cytoplasm</location>
        <location evidence="2">Cytoskeleton</location>
        <location evidence="2">Microtubule organizing center</location>
        <location evidence="2">Centrosome</location>
    </subcellularLocation>
    <subcellularLocation>
        <location evidence="2">Cytoplasm</location>
        <location evidence="2">Cytoskeleton</location>
        <location evidence="2">Spindle</location>
    </subcellularLocation>
    <subcellularLocation>
        <location evidence="2">Nucleus</location>
    </subcellularLocation>
    <subcellularLocation>
        <location evidence="2">Lysosome</location>
    </subcellularLocation>
    <text evidence="2">Mainly cytoplasmic in prophase and prometaphase. Associates with the mitotic spindle as the cells reach chromosome bi-orientation. Localizes to the centrosomes shortly before cells enter anaphase After anaphase onset, predominantly associates with the polar microtubules connecting the 2 opposing centrosomes and gradually diffuses into the cytoplasm during telophase. Localizes to the nucleus upon amino acid starvation. Relocalizes to the cytosol and associates with lysosomes when amino acids are available.</text>
</comment>
<comment type="alternative products">
    <event type="alternative splicing"/>
    <isoform>
        <id>Q99JN2-1</id>
        <name>1</name>
        <sequence type="displayed"/>
    </isoform>
    <isoform>
        <id>Q99JN2-2</id>
        <name>2</name>
        <sequence type="described" ref="VSP_019452"/>
    </isoform>
</comment>
<feature type="initiator methionine" description="Removed" evidence="6">
    <location>
        <position position="1"/>
    </location>
</feature>
<feature type="chain" id="PRO_0000242156" description="Kelch-like protein 22">
    <location>
        <begin position="2"/>
        <end position="634"/>
    </location>
</feature>
<feature type="domain" description="BTB" evidence="3">
    <location>
        <begin position="50"/>
        <end position="117"/>
    </location>
</feature>
<feature type="repeat" description="Kelch 1">
    <location>
        <begin position="299"/>
        <end position="349"/>
    </location>
</feature>
<feature type="repeat" description="Kelch 2">
    <location>
        <begin position="350"/>
        <end position="399"/>
    </location>
</feature>
<feature type="repeat" description="Kelch 3">
    <location>
        <begin position="400"/>
        <end position="446"/>
    </location>
</feature>
<feature type="repeat" description="Kelch 4">
    <location>
        <begin position="448"/>
        <end position="493"/>
    </location>
</feature>
<feature type="repeat" description="Kelch 5">
    <location>
        <begin position="495"/>
        <end position="544"/>
    </location>
</feature>
<feature type="repeat" description="Kelch 6">
    <location>
        <begin position="545"/>
        <end position="593"/>
    </location>
</feature>
<feature type="region of interest" description="Disordered" evidence="4">
    <location>
        <begin position="600"/>
        <end position="634"/>
    </location>
</feature>
<feature type="compositionally biased region" description="Acidic residues" evidence="4">
    <location>
        <begin position="624"/>
        <end position="634"/>
    </location>
</feature>
<feature type="modified residue" description="N-acetylalanine" evidence="6">
    <location>
        <position position="2"/>
    </location>
</feature>
<feature type="modified residue" description="Phosphothreonine" evidence="1">
    <location>
        <position position="463"/>
    </location>
</feature>
<feature type="modified residue" description="Phosphotyrosine" evidence="1">
    <location>
        <position position="466"/>
    </location>
</feature>
<feature type="modified residue" description="Phosphothreonine" evidence="1">
    <location>
        <position position="475"/>
    </location>
</feature>
<feature type="modified residue" description="Phosphothreonine" evidence="2">
    <location>
        <position position="605"/>
    </location>
</feature>
<feature type="splice variant" id="VSP_019452" description="In isoform 2." evidence="7">
    <original>D</original>
    <variation>STPSHSQSLWLPFCEPWSVW</variation>
    <location>
        <position position="634"/>
    </location>
</feature>
<feature type="sequence conflict" description="In Ref. 1; BAC25806." evidence="8" ref="1">
    <original>C</original>
    <variation>L</variation>
    <location>
        <position position="22"/>
    </location>
</feature>
<feature type="sequence conflict" description="In Ref. 1; BAC25806." evidence="8" ref="1">
    <original>Y</original>
    <variation>C</variation>
    <location>
        <position position="428"/>
    </location>
</feature>
<reference key="1">
    <citation type="journal article" date="2005" name="Science">
        <title>The transcriptional landscape of the mammalian genome.</title>
        <authorList>
            <person name="Carninci P."/>
            <person name="Kasukawa T."/>
            <person name="Katayama S."/>
            <person name="Gough J."/>
            <person name="Frith M.C."/>
            <person name="Maeda N."/>
            <person name="Oyama R."/>
            <person name="Ravasi T."/>
            <person name="Lenhard B."/>
            <person name="Wells C."/>
            <person name="Kodzius R."/>
            <person name="Shimokawa K."/>
            <person name="Bajic V.B."/>
            <person name="Brenner S.E."/>
            <person name="Batalov S."/>
            <person name="Forrest A.R."/>
            <person name="Zavolan M."/>
            <person name="Davis M.J."/>
            <person name="Wilming L.G."/>
            <person name="Aidinis V."/>
            <person name="Allen J.E."/>
            <person name="Ambesi-Impiombato A."/>
            <person name="Apweiler R."/>
            <person name="Aturaliya R.N."/>
            <person name="Bailey T.L."/>
            <person name="Bansal M."/>
            <person name="Baxter L."/>
            <person name="Beisel K.W."/>
            <person name="Bersano T."/>
            <person name="Bono H."/>
            <person name="Chalk A.M."/>
            <person name="Chiu K.P."/>
            <person name="Choudhary V."/>
            <person name="Christoffels A."/>
            <person name="Clutterbuck D.R."/>
            <person name="Crowe M.L."/>
            <person name="Dalla E."/>
            <person name="Dalrymple B.P."/>
            <person name="de Bono B."/>
            <person name="Della Gatta G."/>
            <person name="di Bernardo D."/>
            <person name="Down T."/>
            <person name="Engstrom P."/>
            <person name="Fagiolini M."/>
            <person name="Faulkner G."/>
            <person name="Fletcher C.F."/>
            <person name="Fukushima T."/>
            <person name="Furuno M."/>
            <person name="Futaki S."/>
            <person name="Gariboldi M."/>
            <person name="Georgii-Hemming P."/>
            <person name="Gingeras T.R."/>
            <person name="Gojobori T."/>
            <person name="Green R.E."/>
            <person name="Gustincich S."/>
            <person name="Harbers M."/>
            <person name="Hayashi Y."/>
            <person name="Hensch T.K."/>
            <person name="Hirokawa N."/>
            <person name="Hill D."/>
            <person name="Huminiecki L."/>
            <person name="Iacono M."/>
            <person name="Ikeo K."/>
            <person name="Iwama A."/>
            <person name="Ishikawa T."/>
            <person name="Jakt M."/>
            <person name="Kanapin A."/>
            <person name="Katoh M."/>
            <person name="Kawasawa Y."/>
            <person name="Kelso J."/>
            <person name="Kitamura H."/>
            <person name="Kitano H."/>
            <person name="Kollias G."/>
            <person name="Krishnan S.P."/>
            <person name="Kruger A."/>
            <person name="Kummerfeld S.K."/>
            <person name="Kurochkin I.V."/>
            <person name="Lareau L.F."/>
            <person name="Lazarevic D."/>
            <person name="Lipovich L."/>
            <person name="Liu J."/>
            <person name="Liuni S."/>
            <person name="McWilliam S."/>
            <person name="Madan Babu M."/>
            <person name="Madera M."/>
            <person name="Marchionni L."/>
            <person name="Matsuda H."/>
            <person name="Matsuzawa S."/>
            <person name="Miki H."/>
            <person name="Mignone F."/>
            <person name="Miyake S."/>
            <person name="Morris K."/>
            <person name="Mottagui-Tabar S."/>
            <person name="Mulder N."/>
            <person name="Nakano N."/>
            <person name="Nakauchi H."/>
            <person name="Ng P."/>
            <person name="Nilsson R."/>
            <person name="Nishiguchi S."/>
            <person name="Nishikawa S."/>
            <person name="Nori F."/>
            <person name="Ohara O."/>
            <person name="Okazaki Y."/>
            <person name="Orlando V."/>
            <person name="Pang K.C."/>
            <person name="Pavan W.J."/>
            <person name="Pavesi G."/>
            <person name="Pesole G."/>
            <person name="Petrovsky N."/>
            <person name="Piazza S."/>
            <person name="Reed J."/>
            <person name="Reid J.F."/>
            <person name="Ring B.Z."/>
            <person name="Ringwald M."/>
            <person name="Rost B."/>
            <person name="Ruan Y."/>
            <person name="Salzberg S.L."/>
            <person name="Sandelin A."/>
            <person name="Schneider C."/>
            <person name="Schoenbach C."/>
            <person name="Sekiguchi K."/>
            <person name="Semple C.A."/>
            <person name="Seno S."/>
            <person name="Sessa L."/>
            <person name="Sheng Y."/>
            <person name="Shibata Y."/>
            <person name="Shimada H."/>
            <person name="Shimada K."/>
            <person name="Silva D."/>
            <person name="Sinclair B."/>
            <person name="Sperling S."/>
            <person name="Stupka E."/>
            <person name="Sugiura K."/>
            <person name="Sultana R."/>
            <person name="Takenaka Y."/>
            <person name="Taki K."/>
            <person name="Tammoja K."/>
            <person name="Tan S.L."/>
            <person name="Tang S."/>
            <person name="Taylor M.S."/>
            <person name="Tegner J."/>
            <person name="Teichmann S.A."/>
            <person name="Ueda H.R."/>
            <person name="van Nimwegen E."/>
            <person name="Verardo R."/>
            <person name="Wei C.L."/>
            <person name="Yagi K."/>
            <person name="Yamanishi H."/>
            <person name="Zabarovsky E."/>
            <person name="Zhu S."/>
            <person name="Zimmer A."/>
            <person name="Hide W."/>
            <person name="Bult C."/>
            <person name="Grimmond S.M."/>
            <person name="Teasdale R.D."/>
            <person name="Liu E.T."/>
            <person name="Brusic V."/>
            <person name="Quackenbush J."/>
            <person name="Wahlestedt C."/>
            <person name="Mattick J.S."/>
            <person name="Hume D.A."/>
            <person name="Kai C."/>
            <person name="Sasaki D."/>
            <person name="Tomaru Y."/>
            <person name="Fukuda S."/>
            <person name="Kanamori-Katayama M."/>
            <person name="Suzuki M."/>
            <person name="Aoki J."/>
            <person name="Arakawa T."/>
            <person name="Iida J."/>
            <person name="Imamura K."/>
            <person name="Itoh M."/>
            <person name="Kato T."/>
            <person name="Kawaji H."/>
            <person name="Kawagashira N."/>
            <person name="Kawashima T."/>
            <person name="Kojima M."/>
            <person name="Kondo S."/>
            <person name="Konno H."/>
            <person name="Nakano K."/>
            <person name="Ninomiya N."/>
            <person name="Nishio T."/>
            <person name="Okada M."/>
            <person name="Plessy C."/>
            <person name="Shibata K."/>
            <person name="Shiraki T."/>
            <person name="Suzuki S."/>
            <person name="Tagami M."/>
            <person name="Waki K."/>
            <person name="Watahiki A."/>
            <person name="Okamura-Oho Y."/>
            <person name="Suzuki H."/>
            <person name="Kawai J."/>
            <person name="Hayashizaki Y."/>
        </authorList>
    </citation>
    <scope>NUCLEOTIDE SEQUENCE [LARGE SCALE MRNA] (ISOFORMS 1 AND 2)</scope>
    <source>
        <strain>C57BL/6J</strain>
        <tissue>Embryo</tissue>
    </source>
</reference>
<reference key="2">
    <citation type="journal article" date="2009" name="PLoS Biol.">
        <title>Lineage-specific biology revealed by a finished genome assembly of the mouse.</title>
        <authorList>
            <person name="Church D.M."/>
            <person name="Goodstadt L."/>
            <person name="Hillier L.W."/>
            <person name="Zody M.C."/>
            <person name="Goldstein S."/>
            <person name="She X."/>
            <person name="Bult C.J."/>
            <person name="Agarwala R."/>
            <person name="Cherry J.L."/>
            <person name="DiCuccio M."/>
            <person name="Hlavina W."/>
            <person name="Kapustin Y."/>
            <person name="Meric P."/>
            <person name="Maglott D."/>
            <person name="Birtle Z."/>
            <person name="Marques A.C."/>
            <person name="Graves T."/>
            <person name="Zhou S."/>
            <person name="Teague B."/>
            <person name="Potamousis K."/>
            <person name="Churas C."/>
            <person name="Place M."/>
            <person name="Herschleb J."/>
            <person name="Runnheim R."/>
            <person name="Forrest D."/>
            <person name="Amos-Landgraf J."/>
            <person name="Schwartz D.C."/>
            <person name="Cheng Z."/>
            <person name="Lindblad-Toh K."/>
            <person name="Eichler E.E."/>
            <person name="Ponting C.P."/>
        </authorList>
    </citation>
    <scope>NUCLEOTIDE SEQUENCE [LARGE SCALE GENOMIC DNA]</scope>
    <source>
        <strain>C57BL/6J</strain>
    </source>
</reference>
<reference key="3">
    <citation type="journal article" date="2004" name="Genome Res.">
        <title>The status, quality, and expansion of the NIH full-length cDNA project: the Mammalian Gene Collection (MGC).</title>
        <authorList>
            <consortium name="The MGC Project Team"/>
        </authorList>
    </citation>
    <scope>NUCLEOTIDE SEQUENCE [LARGE SCALE MRNA] (ISOFORM 1)</scope>
    <source>
        <strain>FVB/N</strain>
        <tissue>Mammary tumor</tissue>
    </source>
</reference>
<reference key="4">
    <citation type="submission" date="2008-02" db="UniProtKB">
        <authorList>
            <person name="Bienvenut W.V."/>
            <person name="Sandilands E."/>
            <person name="Serrels B."/>
            <person name="Brunton V.G."/>
            <person name="Frame M.C."/>
        </authorList>
    </citation>
    <scope>PROTEIN SEQUENCE OF 2-12; 45-59; 66-76; 158-184; 196-204; 240-256; 268-294; 320-329; 419-434; 495-508 AND 596-603</scope>
    <scope>CLEAVAGE OF INITIATOR METHIONINE</scope>
    <scope>ACETYLATION AT ALA-2</scope>
    <scope>IDENTIFICATION BY MASS SPECTROMETRY</scope>
    <source>
        <tissue>Embryonic fibroblast</tissue>
    </source>
</reference>
<reference key="5">
    <citation type="journal article" date="2018" name="Nature">
        <title>KLHL22 activates amino-acid-dependent mTORC1 signalling to promote tumorigenesis and ageing.</title>
        <authorList>
            <person name="Chen J."/>
            <person name="Ou Y."/>
            <person name="Yang Y."/>
            <person name="Li W."/>
            <person name="Xu Y."/>
            <person name="Xie Y."/>
            <person name="Liu Y."/>
        </authorList>
    </citation>
    <scope>FUNCTION</scope>
</reference>
<organism>
    <name type="scientific">Mus musculus</name>
    <name type="common">Mouse</name>
    <dbReference type="NCBI Taxonomy" id="10090"/>
    <lineage>
        <taxon>Eukaryota</taxon>
        <taxon>Metazoa</taxon>
        <taxon>Chordata</taxon>
        <taxon>Craniata</taxon>
        <taxon>Vertebrata</taxon>
        <taxon>Euteleostomi</taxon>
        <taxon>Mammalia</taxon>
        <taxon>Eutheria</taxon>
        <taxon>Euarchontoglires</taxon>
        <taxon>Glires</taxon>
        <taxon>Rodentia</taxon>
        <taxon>Myomorpha</taxon>
        <taxon>Muroidea</taxon>
        <taxon>Muridae</taxon>
        <taxon>Murinae</taxon>
        <taxon>Mus</taxon>
        <taxon>Mus</taxon>
    </lineage>
</organism>
<accession>Q99JN2</accession>
<accession>D3YW27</accession>
<accession>Q8BT13</accession>